<reference key="1">
    <citation type="submission" date="1998-07" db="EMBL/GenBank/DDBJ databases">
        <title>Molecular cloning and characterization of Orc1 from Candida albicans.</title>
        <authorList>
            <person name="Vinz K."/>
            <person name="Eck R."/>
        </authorList>
    </citation>
    <scope>NUCLEOTIDE SEQUENCE [MRNA]</scope>
    <source>
        <strain>ATCC 10261 / CBS 2718 / NBRC 1061 / FMJ 1011</strain>
    </source>
</reference>
<dbReference type="EMBL" id="Y17395">
    <property type="protein sequence ID" value="CAA76762.1"/>
    <property type="molecule type" value="mRNA"/>
</dbReference>
<dbReference type="SMR" id="O74270"/>
<dbReference type="VEuPathDB" id="FungiDB:C1_03070C_A"/>
<dbReference type="VEuPathDB" id="FungiDB:CAWG_01077"/>
<dbReference type="GO" id="GO:0005664">
    <property type="term" value="C:nuclear origin of replication recognition complex"/>
    <property type="evidence" value="ECO:0007669"/>
    <property type="project" value="TreeGrafter"/>
</dbReference>
<dbReference type="GO" id="GO:0005524">
    <property type="term" value="F:ATP binding"/>
    <property type="evidence" value="ECO:0007669"/>
    <property type="project" value="UniProtKB-KW"/>
</dbReference>
<dbReference type="GO" id="GO:0016887">
    <property type="term" value="F:ATP hydrolysis activity"/>
    <property type="evidence" value="ECO:0007669"/>
    <property type="project" value="InterPro"/>
</dbReference>
<dbReference type="GO" id="GO:0003682">
    <property type="term" value="F:chromatin binding"/>
    <property type="evidence" value="ECO:0007669"/>
    <property type="project" value="InterPro"/>
</dbReference>
<dbReference type="GO" id="GO:0003688">
    <property type="term" value="F:DNA replication origin binding"/>
    <property type="evidence" value="ECO:0007669"/>
    <property type="project" value="TreeGrafter"/>
</dbReference>
<dbReference type="GO" id="GO:0046872">
    <property type="term" value="F:metal ion binding"/>
    <property type="evidence" value="ECO:0007669"/>
    <property type="project" value="UniProtKB-KW"/>
</dbReference>
<dbReference type="GO" id="GO:0006270">
    <property type="term" value="P:DNA replication initiation"/>
    <property type="evidence" value="ECO:0007669"/>
    <property type="project" value="TreeGrafter"/>
</dbReference>
<dbReference type="GO" id="GO:0033314">
    <property type="term" value="P:mitotic DNA replication checkpoint signaling"/>
    <property type="evidence" value="ECO:0007669"/>
    <property type="project" value="TreeGrafter"/>
</dbReference>
<dbReference type="CDD" id="cd00009">
    <property type="entry name" value="AAA"/>
    <property type="match status" value="1"/>
</dbReference>
<dbReference type="CDD" id="cd04720">
    <property type="entry name" value="BAH_Orc1p_Yeast"/>
    <property type="match status" value="1"/>
</dbReference>
<dbReference type="FunFam" id="1.10.8.60:FF:000274">
    <property type="entry name" value="Origin recognition complex subunit 1"/>
    <property type="match status" value="1"/>
</dbReference>
<dbReference type="FunFam" id="3.40.50.300:FF:000199">
    <property type="entry name" value="Origin recognition complex subunit 1"/>
    <property type="match status" value="1"/>
</dbReference>
<dbReference type="Gene3D" id="1.10.8.60">
    <property type="match status" value="1"/>
</dbReference>
<dbReference type="Gene3D" id="2.30.30.490">
    <property type="match status" value="1"/>
</dbReference>
<dbReference type="Gene3D" id="3.40.50.300">
    <property type="entry name" value="P-loop containing nucleotide triphosphate hydrolases"/>
    <property type="match status" value="1"/>
</dbReference>
<dbReference type="InterPro" id="IPR041083">
    <property type="entry name" value="AAA_lid_10"/>
</dbReference>
<dbReference type="InterPro" id="IPR003959">
    <property type="entry name" value="ATPase_AAA_core"/>
</dbReference>
<dbReference type="InterPro" id="IPR001025">
    <property type="entry name" value="BAH_dom"/>
</dbReference>
<dbReference type="InterPro" id="IPR043151">
    <property type="entry name" value="BAH_sf"/>
</dbReference>
<dbReference type="InterPro" id="IPR050311">
    <property type="entry name" value="ORC1/CDC6"/>
</dbReference>
<dbReference type="InterPro" id="IPR048867">
    <property type="entry name" value="ORC1_wHTH"/>
</dbReference>
<dbReference type="InterPro" id="IPR027417">
    <property type="entry name" value="P-loop_NTPase"/>
</dbReference>
<dbReference type="PANTHER" id="PTHR10763">
    <property type="entry name" value="CELL DIVISION CONTROL PROTEIN 6-RELATED"/>
    <property type="match status" value="1"/>
</dbReference>
<dbReference type="PANTHER" id="PTHR10763:SF23">
    <property type="entry name" value="ORIGIN RECOGNITION COMPLEX SUBUNIT 1"/>
    <property type="match status" value="1"/>
</dbReference>
<dbReference type="Pfam" id="PF00004">
    <property type="entry name" value="AAA"/>
    <property type="match status" value="1"/>
</dbReference>
<dbReference type="Pfam" id="PF17872">
    <property type="entry name" value="AAA_lid_10"/>
    <property type="match status" value="1"/>
</dbReference>
<dbReference type="Pfam" id="PF21312">
    <property type="entry name" value="ORC1_wHTH"/>
    <property type="match status" value="1"/>
</dbReference>
<dbReference type="SMART" id="SM00439">
    <property type="entry name" value="BAH"/>
    <property type="match status" value="1"/>
</dbReference>
<dbReference type="SUPFAM" id="SSF82061">
    <property type="entry name" value="BAH domain"/>
    <property type="match status" value="1"/>
</dbReference>
<dbReference type="SUPFAM" id="SSF52540">
    <property type="entry name" value="P-loop containing nucleoside triphosphate hydrolases"/>
    <property type="match status" value="1"/>
</dbReference>
<dbReference type="PROSITE" id="PS51038">
    <property type="entry name" value="BAH"/>
    <property type="match status" value="1"/>
</dbReference>
<organism>
    <name type="scientific">Candida albicans</name>
    <name type="common">Yeast</name>
    <dbReference type="NCBI Taxonomy" id="5476"/>
    <lineage>
        <taxon>Eukaryota</taxon>
        <taxon>Fungi</taxon>
        <taxon>Dikarya</taxon>
        <taxon>Ascomycota</taxon>
        <taxon>Saccharomycotina</taxon>
        <taxon>Pichiomycetes</taxon>
        <taxon>Debaryomycetaceae</taxon>
        <taxon>Candida/Lodderomyces clade</taxon>
        <taxon>Candida</taxon>
    </lineage>
</organism>
<comment type="function">
    <text evidence="1">Component of the origin recognition complex (ORC) that binds origins of replication. It has a role in both chromosomal replication and mating type transcriptional silencing. Binds to the ARS consensus sequence (ACS) of origins of replication in an ATP-dependent manner (By similarity).</text>
</comment>
<comment type="subunit">
    <text evidence="1">ORC is composed of six subunits.</text>
</comment>
<comment type="subcellular location">
    <subcellularLocation>
        <location evidence="1">Nucleus</location>
    </subcellularLocation>
</comment>
<comment type="similarity">
    <text evidence="5">Belongs to the ORC1 family.</text>
</comment>
<proteinExistence type="evidence at transcript level"/>
<feature type="chain" id="PRO_0000127070" description="Origin recognition complex subunit 1">
    <location>
        <begin position="1"/>
        <end position="805"/>
    </location>
</feature>
<feature type="domain" description="BAH" evidence="3">
    <location>
        <begin position="60"/>
        <end position="180"/>
    </location>
</feature>
<feature type="region of interest" description="Disordered" evidence="4">
    <location>
        <begin position="1"/>
        <end position="41"/>
    </location>
</feature>
<feature type="region of interest" description="Disordered" evidence="4">
    <location>
        <begin position="223"/>
        <end position="334"/>
    </location>
</feature>
<feature type="compositionally biased region" description="Basic and acidic residues" evidence="4">
    <location>
        <begin position="239"/>
        <end position="259"/>
    </location>
</feature>
<feature type="compositionally biased region" description="Acidic residues" evidence="4">
    <location>
        <begin position="271"/>
        <end position="303"/>
    </location>
</feature>
<feature type="compositionally biased region" description="Basic residues" evidence="4">
    <location>
        <begin position="308"/>
        <end position="321"/>
    </location>
</feature>
<feature type="binding site" evidence="2">
    <location>
        <begin position="428"/>
        <end position="436"/>
    </location>
    <ligand>
        <name>ATP</name>
        <dbReference type="ChEBI" id="CHEBI:30616"/>
    </ligand>
</feature>
<feature type="binding site" evidence="2">
    <location>
        <position position="514"/>
    </location>
    <ligand>
        <name>Mg(2+)</name>
        <dbReference type="ChEBI" id="CHEBI:18420"/>
    </ligand>
</feature>
<feature type="binding site" evidence="2">
    <location>
        <position position="515"/>
    </location>
    <ligand>
        <name>ATP</name>
        <dbReference type="ChEBI" id="CHEBI:30616"/>
    </ligand>
</feature>
<feature type="binding site" evidence="2">
    <location>
        <position position="515"/>
    </location>
    <ligand>
        <name>Mg(2+)</name>
        <dbReference type="ChEBI" id="CHEBI:18420"/>
    </ligand>
</feature>
<feature type="binding site" evidence="2">
    <location>
        <position position="548"/>
    </location>
    <ligand>
        <name>ATP</name>
        <dbReference type="ChEBI" id="CHEBI:30616"/>
    </ligand>
</feature>
<feature type="binding site" evidence="2">
    <location>
        <position position="621"/>
    </location>
    <ligand>
        <name>ATP</name>
        <dbReference type="ChEBI" id="CHEBI:30616"/>
    </ligand>
</feature>
<evidence type="ECO:0000250" key="1"/>
<evidence type="ECO:0000250" key="2">
    <source>
        <dbReference type="UniProtKB" id="Q13415"/>
    </source>
</evidence>
<evidence type="ECO:0000255" key="3">
    <source>
        <dbReference type="PROSITE-ProRule" id="PRU00370"/>
    </source>
</evidence>
<evidence type="ECO:0000256" key="4">
    <source>
        <dbReference type="SAM" id="MobiDB-lite"/>
    </source>
</evidence>
<evidence type="ECO:0000305" key="5"/>
<accession>O74270</accession>
<keyword id="KW-0067">ATP-binding</keyword>
<keyword id="KW-0235">DNA replication</keyword>
<keyword id="KW-0238">DNA-binding</keyword>
<keyword id="KW-0460">Magnesium</keyword>
<keyword id="KW-0479">Metal-binding</keyword>
<keyword id="KW-0547">Nucleotide-binding</keyword>
<keyword id="KW-0539">Nucleus</keyword>
<sequence length="805" mass="91249">MNKLPKGWNFTIVDDNADSTNSENIQGKRPRRSRTSVQRSDGASPIIRDNIVLIRTDDNEEFKVGDTIEITQGKGPEDPTTEYGLITEIKFGNSEFIEVIVDWFIRSSEIVGMPNDFFADNELLLTPFRSEVKFIDFIRPINVLSESQFADVVIDESNSHSTFLVKRATDNEGNFSDIFDYKDFSGKVLENPKKCAIQVKELISTTVQKELLKEFSKEQRKKKANKVSTTGRVTRFNKRKESVSTKAIKPENKQVKIEIDNDVLSDQSEEKQEESDYNEAEDANSALESDEENISQESEDSEVEYSTKKKLKNKKLSRRSKAAATPSPKRKLQKKDIEDIYSVVTPTKRMKLGKDDRDSLPVFLSPTKSVPSEFTDPKSVAFKEVKQRLHTSQKLNALPGREDEFAMIYMNHESAVNEKTGCCVYVCGLPGMGKTATIKDVVEQMTYSSERGEMEQFSYLELNGLKLLSPTVAYEALWHHISGDKVSASNAALLLEEYFKREDHKRKPLVILMDEFDQIATKKQNVMYNFFNWPTYSTSKLIVIAVANTMDLPERMLTNKIASRLGLRRIQFRGYTFQQLGDIITHRLEMITKNNRRKVVITSDAIGFASRKVASVSGDARRALTICRRAVEIAEKEYLENKKGEDDSEPYQVLISHISTAINETVNSPLSKYIASLPFASKLVLASLLRRSRRTGLAENSLGDIIDEMRNSFAMATHSEEQGSDELNMQDVLYSDKTFTATNETVPILNLRIHFFKQIVTSLVEAGIIIQQNSPGETSRLVKLDVPEEEVVSVFKKDNAISQFL</sequence>
<protein>
    <recommendedName>
        <fullName>Origin recognition complex subunit 1</fullName>
    </recommendedName>
</protein>
<gene>
    <name type="primary">ORC1</name>
</gene>
<name>ORC1_CANAX</name>